<evidence type="ECO:0000255" key="1">
    <source>
        <dbReference type="HAMAP-Rule" id="MF_00270"/>
    </source>
</evidence>
<evidence type="ECO:0000305" key="2"/>
<feature type="chain" id="PRO_1000003627" description="Small ribosomal subunit protein bS18">
    <location>
        <begin position="1"/>
        <end position="79"/>
    </location>
</feature>
<protein>
    <recommendedName>
        <fullName evidence="1">Small ribosomal subunit protein bS18</fullName>
    </recommendedName>
    <alternativeName>
        <fullName evidence="2">30S ribosomal protein S18</fullName>
    </alternativeName>
</protein>
<sequence length="79" mass="9204">MAQQRRGGFKRRKKVDFIAANKIEYVDYKDTELLSRFVSERGKILPRRVTGTSAKNQRKVTTAIKRARVMALMPYVNED</sequence>
<name>RS18_STRPC</name>
<keyword id="KW-0687">Ribonucleoprotein</keyword>
<keyword id="KW-0689">Ribosomal protein</keyword>
<keyword id="KW-0694">RNA-binding</keyword>
<keyword id="KW-0699">rRNA-binding</keyword>
<organism>
    <name type="scientific">Streptococcus pyogenes serotype M12 (strain MGAS9429)</name>
    <dbReference type="NCBI Taxonomy" id="370551"/>
    <lineage>
        <taxon>Bacteria</taxon>
        <taxon>Bacillati</taxon>
        <taxon>Bacillota</taxon>
        <taxon>Bacilli</taxon>
        <taxon>Lactobacillales</taxon>
        <taxon>Streptococcaceae</taxon>
        <taxon>Streptococcus</taxon>
    </lineage>
</organism>
<gene>
    <name evidence="1" type="primary">rpsR</name>
    <name type="ordered locus">MGAS9429_Spy1558</name>
</gene>
<dbReference type="EMBL" id="CP000259">
    <property type="protein sequence ID" value="ABF32745.1"/>
    <property type="molecule type" value="Genomic_DNA"/>
</dbReference>
<dbReference type="RefSeq" id="WP_002983142.1">
    <property type="nucleotide sequence ID" value="NC_008021.1"/>
</dbReference>
<dbReference type="SMR" id="Q1JK78"/>
<dbReference type="GeneID" id="93826879"/>
<dbReference type="KEGG" id="spk:MGAS9429_Spy1558"/>
<dbReference type="HOGENOM" id="CLU_148710_2_2_9"/>
<dbReference type="Proteomes" id="UP000002433">
    <property type="component" value="Chromosome"/>
</dbReference>
<dbReference type="GO" id="GO:0022627">
    <property type="term" value="C:cytosolic small ribosomal subunit"/>
    <property type="evidence" value="ECO:0007669"/>
    <property type="project" value="TreeGrafter"/>
</dbReference>
<dbReference type="GO" id="GO:0070181">
    <property type="term" value="F:small ribosomal subunit rRNA binding"/>
    <property type="evidence" value="ECO:0007669"/>
    <property type="project" value="TreeGrafter"/>
</dbReference>
<dbReference type="GO" id="GO:0003735">
    <property type="term" value="F:structural constituent of ribosome"/>
    <property type="evidence" value="ECO:0007669"/>
    <property type="project" value="InterPro"/>
</dbReference>
<dbReference type="GO" id="GO:0006412">
    <property type="term" value="P:translation"/>
    <property type="evidence" value="ECO:0007669"/>
    <property type="project" value="UniProtKB-UniRule"/>
</dbReference>
<dbReference type="FunFam" id="4.10.640.10:FF:000003">
    <property type="entry name" value="30S ribosomal protein S18"/>
    <property type="match status" value="1"/>
</dbReference>
<dbReference type="Gene3D" id="4.10.640.10">
    <property type="entry name" value="Ribosomal protein S18"/>
    <property type="match status" value="1"/>
</dbReference>
<dbReference type="HAMAP" id="MF_00270">
    <property type="entry name" value="Ribosomal_bS18"/>
    <property type="match status" value="1"/>
</dbReference>
<dbReference type="InterPro" id="IPR001648">
    <property type="entry name" value="Ribosomal_bS18"/>
</dbReference>
<dbReference type="InterPro" id="IPR018275">
    <property type="entry name" value="Ribosomal_bS18_CS"/>
</dbReference>
<dbReference type="InterPro" id="IPR036870">
    <property type="entry name" value="Ribosomal_bS18_sf"/>
</dbReference>
<dbReference type="NCBIfam" id="TIGR00165">
    <property type="entry name" value="S18"/>
    <property type="match status" value="1"/>
</dbReference>
<dbReference type="PANTHER" id="PTHR13479">
    <property type="entry name" value="30S RIBOSOMAL PROTEIN S18"/>
    <property type="match status" value="1"/>
</dbReference>
<dbReference type="PANTHER" id="PTHR13479:SF40">
    <property type="entry name" value="SMALL RIBOSOMAL SUBUNIT PROTEIN BS18M"/>
    <property type="match status" value="1"/>
</dbReference>
<dbReference type="Pfam" id="PF01084">
    <property type="entry name" value="Ribosomal_S18"/>
    <property type="match status" value="1"/>
</dbReference>
<dbReference type="PRINTS" id="PR00974">
    <property type="entry name" value="RIBOSOMALS18"/>
</dbReference>
<dbReference type="SUPFAM" id="SSF46911">
    <property type="entry name" value="Ribosomal protein S18"/>
    <property type="match status" value="1"/>
</dbReference>
<dbReference type="PROSITE" id="PS00057">
    <property type="entry name" value="RIBOSOMAL_S18"/>
    <property type="match status" value="1"/>
</dbReference>
<comment type="function">
    <text evidence="1">Binds as a heterodimer with protein bS6 to the central domain of the 16S rRNA, where it helps stabilize the platform of the 30S subunit.</text>
</comment>
<comment type="subunit">
    <text evidence="1">Part of the 30S ribosomal subunit. Forms a tight heterodimer with protein bS6.</text>
</comment>
<comment type="similarity">
    <text evidence="1">Belongs to the bacterial ribosomal protein bS18 family.</text>
</comment>
<reference key="1">
    <citation type="journal article" date="2006" name="Proc. Natl. Acad. Sci. U.S.A.">
        <title>Molecular genetic anatomy of inter- and intraserotype variation in the human bacterial pathogen group A Streptococcus.</title>
        <authorList>
            <person name="Beres S.B."/>
            <person name="Richter E.W."/>
            <person name="Nagiec M.J."/>
            <person name="Sumby P."/>
            <person name="Porcella S.F."/>
            <person name="DeLeo F.R."/>
            <person name="Musser J.M."/>
        </authorList>
    </citation>
    <scope>NUCLEOTIDE SEQUENCE [LARGE SCALE GENOMIC DNA]</scope>
    <source>
        <strain>MGAS9429</strain>
    </source>
</reference>
<proteinExistence type="inferred from homology"/>
<accession>Q1JK78</accession>